<comment type="function">
    <text evidence="1">Acts as a processive, ATP-dependent zinc metallopeptidase for both cytoplasmic and membrane proteins. Plays a role in the quality control of integral membrane proteins.</text>
</comment>
<comment type="function">
    <text>Can complement an E.coli ftsH disruption mutant.</text>
</comment>
<comment type="cofactor">
    <cofactor evidence="1">
        <name>Zn(2+)</name>
        <dbReference type="ChEBI" id="CHEBI:29105"/>
    </cofactor>
    <text evidence="1">Binds 1 zinc ion per subunit.</text>
</comment>
<comment type="subunit">
    <text evidence="1">Homohexamer.</text>
</comment>
<comment type="subcellular location">
    <subcellularLocation>
        <location evidence="1">Cell membrane</location>
        <topology evidence="1">Multi-pass membrane protein</topology>
        <orientation evidence="1">Cytoplasmic side</orientation>
    </subcellularLocation>
</comment>
<comment type="induction">
    <text evidence="3">Induced by heat shock (37 degrees Celsius) and osmotic shock (0.5 M NaCl) but not by exposure to alcohol, sulfite or ethidium bromide.</text>
</comment>
<comment type="similarity">
    <text evidence="1">In the central section; belongs to the AAA ATPase family.</text>
</comment>
<comment type="similarity">
    <text evidence="1">In the C-terminal section; belongs to the peptidase M41 family.</text>
</comment>
<dbReference type="EC" id="3.4.24.-" evidence="1"/>
<dbReference type="EMBL" id="AY196466">
    <property type="protein sequence ID" value="AAO43575.1"/>
    <property type="molecule type" value="Genomic_DNA"/>
</dbReference>
<dbReference type="SMR" id="Q83XX3"/>
<dbReference type="GO" id="GO:0005886">
    <property type="term" value="C:plasma membrane"/>
    <property type="evidence" value="ECO:0007669"/>
    <property type="project" value="UniProtKB-SubCell"/>
</dbReference>
<dbReference type="GO" id="GO:0005524">
    <property type="term" value="F:ATP binding"/>
    <property type="evidence" value="ECO:0007669"/>
    <property type="project" value="UniProtKB-UniRule"/>
</dbReference>
<dbReference type="GO" id="GO:0016887">
    <property type="term" value="F:ATP hydrolysis activity"/>
    <property type="evidence" value="ECO:0007669"/>
    <property type="project" value="UniProtKB-UniRule"/>
</dbReference>
<dbReference type="GO" id="GO:0004176">
    <property type="term" value="F:ATP-dependent peptidase activity"/>
    <property type="evidence" value="ECO:0007669"/>
    <property type="project" value="InterPro"/>
</dbReference>
<dbReference type="GO" id="GO:0004222">
    <property type="term" value="F:metalloendopeptidase activity"/>
    <property type="evidence" value="ECO:0007669"/>
    <property type="project" value="InterPro"/>
</dbReference>
<dbReference type="GO" id="GO:0008270">
    <property type="term" value="F:zinc ion binding"/>
    <property type="evidence" value="ECO:0007669"/>
    <property type="project" value="UniProtKB-UniRule"/>
</dbReference>
<dbReference type="GO" id="GO:0030163">
    <property type="term" value="P:protein catabolic process"/>
    <property type="evidence" value="ECO:0007669"/>
    <property type="project" value="UniProtKB-UniRule"/>
</dbReference>
<dbReference type="GO" id="GO:0006508">
    <property type="term" value="P:proteolysis"/>
    <property type="evidence" value="ECO:0007669"/>
    <property type="project" value="UniProtKB-KW"/>
</dbReference>
<dbReference type="CDD" id="cd19501">
    <property type="entry name" value="RecA-like_FtsH"/>
    <property type="match status" value="1"/>
</dbReference>
<dbReference type="FunFam" id="1.10.8.60:FF:000001">
    <property type="entry name" value="ATP-dependent zinc metalloprotease FtsH"/>
    <property type="match status" value="1"/>
</dbReference>
<dbReference type="FunFam" id="1.20.58.760:FF:000001">
    <property type="entry name" value="ATP-dependent zinc metalloprotease FtsH"/>
    <property type="match status" value="1"/>
</dbReference>
<dbReference type="FunFam" id="3.40.50.300:FF:000001">
    <property type="entry name" value="ATP-dependent zinc metalloprotease FtsH"/>
    <property type="match status" value="1"/>
</dbReference>
<dbReference type="Gene3D" id="1.10.8.60">
    <property type="match status" value="1"/>
</dbReference>
<dbReference type="Gene3D" id="3.40.50.300">
    <property type="entry name" value="P-loop containing nucleotide triphosphate hydrolases"/>
    <property type="match status" value="1"/>
</dbReference>
<dbReference type="Gene3D" id="1.20.58.760">
    <property type="entry name" value="Peptidase M41"/>
    <property type="match status" value="1"/>
</dbReference>
<dbReference type="HAMAP" id="MF_01458">
    <property type="entry name" value="FtsH"/>
    <property type="match status" value="1"/>
</dbReference>
<dbReference type="InterPro" id="IPR003593">
    <property type="entry name" value="AAA+_ATPase"/>
</dbReference>
<dbReference type="InterPro" id="IPR041569">
    <property type="entry name" value="AAA_lid_3"/>
</dbReference>
<dbReference type="InterPro" id="IPR003959">
    <property type="entry name" value="ATPase_AAA_core"/>
</dbReference>
<dbReference type="InterPro" id="IPR005936">
    <property type="entry name" value="FtsH"/>
</dbReference>
<dbReference type="InterPro" id="IPR027417">
    <property type="entry name" value="P-loop_NTPase"/>
</dbReference>
<dbReference type="InterPro" id="IPR011546">
    <property type="entry name" value="Pept_M41_FtsH_extracell"/>
</dbReference>
<dbReference type="InterPro" id="IPR000642">
    <property type="entry name" value="Peptidase_M41"/>
</dbReference>
<dbReference type="InterPro" id="IPR037219">
    <property type="entry name" value="Peptidase_M41-like"/>
</dbReference>
<dbReference type="NCBIfam" id="TIGR01241">
    <property type="entry name" value="FtsH_fam"/>
    <property type="match status" value="1"/>
</dbReference>
<dbReference type="PANTHER" id="PTHR23076:SF113">
    <property type="entry name" value="ATP-DEPENDENT ZINC METALLOPROTEASE FTSH 1, CHLOROPLASTIC-RELATED"/>
    <property type="match status" value="1"/>
</dbReference>
<dbReference type="PANTHER" id="PTHR23076">
    <property type="entry name" value="METALLOPROTEASE M41 FTSH"/>
    <property type="match status" value="1"/>
</dbReference>
<dbReference type="Pfam" id="PF00004">
    <property type="entry name" value="AAA"/>
    <property type="match status" value="1"/>
</dbReference>
<dbReference type="Pfam" id="PF17862">
    <property type="entry name" value="AAA_lid_3"/>
    <property type="match status" value="1"/>
</dbReference>
<dbReference type="Pfam" id="PF06480">
    <property type="entry name" value="FtsH_ext"/>
    <property type="match status" value="1"/>
</dbReference>
<dbReference type="Pfam" id="PF01434">
    <property type="entry name" value="Peptidase_M41"/>
    <property type="match status" value="1"/>
</dbReference>
<dbReference type="SMART" id="SM00382">
    <property type="entry name" value="AAA"/>
    <property type="match status" value="1"/>
</dbReference>
<dbReference type="SUPFAM" id="SSF140990">
    <property type="entry name" value="FtsH protease domain-like"/>
    <property type="match status" value="1"/>
</dbReference>
<dbReference type="SUPFAM" id="SSF52540">
    <property type="entry name" value="P-loop containing nucleoside triphosphate hydrolases"/>
    <property type="match status" value="1"/>
</dbReference>
<keyword id="KW-0067">ATP-binding</keyword>
<keyword id="KW-1003">Cell membrane</keyword>
<keyword id="KW-0378">Hydrolase</keyword>
<keyword id="KW-0472">Membrane</keyword>
<keyword id="KW-0479">Metal-binding</keyword>
<keyword id="KW-0482">Metalloprotease</keyword>
<keyword id="KW-0547">Nucleotide-binding</keyword>
<keyword id="KW-0645">Protease</keyword>
<keyword id="KW-0346">Stress response</keyword>
<keyword id="KW-0812">Transmembrane</keyword>
<keyword id="KW-1133">Transmembrane helix</keyword>
<keyword id="KW-0862">Zinc</keyword>
<reference key="1">
    <citation type="journal article" date="2003" name="Appl. Environ. Microbiol.">
        <title>The ftsH gene of the wine bacterium Oenococcus oeni is involved in protection against environmental stress.</title>
        <authorList>
            <person name="Bourdineaud J.P."/>
            <person name="Nehme B."/>
            <person name="Tesse S."/>
            <person name="Lonvaud-Funel A."/>
        </authorList>
    </citation>
    <scope>NUCLEOTIDE SEQUENCE [GENOMIC DNA]</scope>
    <scope>INDUCTION</scope>
    <source>
        <strain>IOEB 8406</strain>
    </source>
</reference>
<organism>
    <name type="scientific">Oenococcus oeni</name>
    <name type="common">Leuconostoc oenos</name>
    <dbReference type="NCBI Taxonomy" id="1247"/>
    <lineage>
        <taxon>Bacteria</taxon>
        <taxon>Bacillati</taxon>
        <taxon>Bacillota</taxon>
        <taxon>Bacilli</taxon>
        <taxon>Lactobacillales</taxon>
        <taxon>Lactobacillaceae</taxon>
        <taxon>Oenococcus</taxon>
    </lineage>
</organism>
<accession>Q83XX3</accession>
<gene>
    <name evidence="1" type="primary">ftsH</name>
</gene>
<evidence type="ECO:0000255" key="1">
    <source>
        <dbReference type="HAMAP-Rule" id="MF_01458"/>
    </source>
</evidence>
<evidence type="ECO:0000256" key="2">
    <source>
        <dbReference type="SAM" id="MobiDB-lite"/>
    </source>
</evidence>
<evidence type="ECO:0000269" key="3">
    <source>
    </source>
</evidence>
<protein>
    <recommendedName>
        <fullName evidence="1">ATP-dependent zinc metalloprotease FtsH</fullName>
        <ecNumber evidence="1">3.4.24.-</ecNumber>
    </recommendedName>
</protein>
<name>FTSH_OENOE</name>
<proteinExistence type="evidence at transcript level"/>
<feature type="chain" id="PRO_0000400366" description="ATP-dependent zinc metalloprotease FtsH">
    <location>
        <begin position="1"/>
        <end position="715"/>
    </location>
</feature>
<feature type="topological domain" description="Cytoplasmic" evidence="1">
    <location>
        <begin position="1"/>
        <end position="10"/>
    </location>
</feature>
<feature type="transmembrane region" description="Helical" evidence="1">
    <location>
        <begin position="11"/>
        <end position="31"/>
    </location>
</feature>
<feature type="topological domain" description="Extracellular" evidence="1">
    <location>
        <begin position="32"/>
        <end position="137"/>
    </location>
</feature>
<feature type="transmembrane region" description="Helical" evidence="1">
    <location>
        <begin position="138"/>
        <end position="158"/>
    </location>
</feature>
<feature type="topological domain" description="Cytoplasmic" evidence="1">
    <location>
        <begin position="159"/>
        <end position="715"/>
    </location>
</feature>
<feature type="region of interest" description="Disordered" evidence="2">
    <location>
        <begin position="167"/>
        <end position="187"/>
    </location>
</feature>
<feature type="active site" evidence="1">
    <location>
        <position position="456"/>
    </location>
</feature>
<feature type="binding site" evidence="1">
    <location>
        <begin position="233"/>
        <end position="240"/>
    </location>
    <ligand>
        <name>ATP</name>
        <dbReference type="ChEBI" id="CHEBI:30616"/>
    </ligand>
</feature>
<feature type="binding site" evidence="1">
    <location>
        <position position="455"/>
    </location>
    <ligand>
        <name>Zn(2+)</name>
        <dbReference type="ChEBI" id="CHEBI:29105"/>
        <note>catalytic</note>
    </ligand>
</feature>
<feature type="binding site" evidence="1">
    <location>
        <position position="459"/>
    </location>
    <ligand>
        <name>Zn(2+)</name>
        <dbReference type="ChEBI" id="CHEBI:29105"/>
        <note>catalytic</note>
    </ligand>
</feature>
<feature type="binding site" evidence="1">
    <location>
        <position position="531"/>
    </location>
    <ligand>
        <name>Zn(2+)</name>
        <dbReference type="ChEBI" id="CHEBI:29105"/>
        <note>catalytic</note>
    </ligand>
</feature>
<sequence>MKNKNRGFFRSSLSYAFVILAVIFLIYSFFGRSDGSVKHLSTTTFLKELKNNKIKDFTIQPGDSGVYTIAGDFKKAQKSSSSSSSTTTLLSGYQSSVTKFTAYVLPNNSSLKQITTAAQKAGVAVNPKPAASNFWGSMLTLILPTLIMFALLYWMLIGSQRGQGGSGGPGGIMSFGRSKAKPADPKQNKIRFADVAGEEEEKQELVEVVEFLKDPKKFTKLGARIPKGVLLEGPPGTGKTLLAKAVAGEAKTPFFSISGSDFVEMFVGVGASRVRDLFENAKKSAPSIIFIDEIDAVGRRRGAGMGGGNDEREQTLNQILIEMDGFEGSEGVIVLASTNRSDVLDPALLRSGRFDRKILVGAPDVKGREAILRVHAKNKPLAADVDLKVIAQQTPGFVGADLENLLNEAALLAARNDEKAVTAADIDEAEDRVIAGPAKKDRKTTQDERETVAYHEAGHAIVGLVLNDAQVVRKVTIVPRGRAGGYALMMPKDERYLMSEKDAKEELAGLMGGRAAEILINHVASSGASNDFQQATQIAREMVTQYGMSDKLGMVQLEGSSNVFVGDPNNPNPPYSQKTSELIDEEVRRLTNEAYKRAVDIIKSHPKQHKAIAEALLKYETLDEAQIRSLFETGEIPSDLVKDSQRPARPLSYEESKAALKKNGAVDNKEAEDELKRTKMIRKMKMIPSRVPIQLQKRRQPRRLQLLDAVNNKFD</sequence>